<accession>P0DTT8</accession>
<dbReference type="GO" id="GO:0005576">
    <property type="term" value="C:extracellular region"/>
    <property type="evidence" value="ECO:0007669"/>
    <property type="project" value="UniProtKB-SubCell"/>
</dbReference>
<dbReference type="GO" id="GO:0045087">
    <property type="term" value="P:innate immune response"/>
    <property type="evidence" value="ECO:0007669"/>
    <property type="project" value="UniProtKB-KW"/>
</dbReference>
<proteinExistence type="evidence at protein level"/>
<sequence length="19" mass="2013">FLSLIPTAINAVSAIAKHF</sequence>
<organism>
    <name type="scientific">Pithecopus nordestinus</name>
    <name type="common">Northeastern Brazilian leaf frog</name>
    <name type="synonym">Phyllomedusa nordestina</name>
    <dbReference type="NCBI Taxonomy" id="2034992"/>
    <lineage>
        <taxon>Eukaryota</taxon>
        <taxon>Metazoa</taxon>
        <taxon>Chordata</taxon>
        <taxon>Craniata</taxon>
        <taxon>Vertebrata</taxon>
        <taxon>Euteleostomi</taxon>
        <taxon>Amphibia</taxon>
        <taxon>Batrachia</taxon>
        <taxon>Anura</taxon>
        <taxon>Neobatrachia</taxon>
        <taxon>Hyloidea</taxon>
        <taxon>Hylidae</taxon>
        <taxon>Phyllomedusinae</taxon>
        <taxon>Pithecopus</taxon>
    </lineage>
</organism>
<comment type="function">
    <text evidence="1">Antimicrobial peptide with low activity against Leishmania species (L.amazonensis and L.infantum) (PubMed:23774944). Shows low cytotoxicity against mammalian cells in models of peritoneal macrophages (PubMed:23774944).</text>
</comment>
<comment type="subcellular location">
    <subcellularLocation>
        <location evidence="1">Secreted</location>
    </subcellularLocation>
</comment>
<comment type="tissue specificity">
    <text evidence="4">Expressed by the skin glands.</text>
</comment>
<comment type="PTM">
    <text evidence="1">Shorter peptides due to unspecific cleavage of this peptide have also been identified.</text>
</comment>
<comment type="mass spectrometry" mass="2012.36" method="MALDI" evidence="1"/>
<comment type="similarity">
    <text evidence="3">Belongs to the frog skin active peptide (FSAP) family. Phylloseptin subfamily.</text>
</comment>
<comment type="caution">
    <text evidence="4">Sequence shown in this entry in copied from Fig.2, and not from Table 1, which differs.</text>
</comment>
<evidence type="ECO:0000269" key="1">
    <source>
    </source>
</evidence>
<evidence type="ECO:0000303" key="2">
    <source>
    </source>
</evidence>
<evidence type="ECO:0000305" key="3"/>
<evidence type="ECO:0000305" key="4">
    <source>
    </source>
</evidence>
<protein>
    <recommendedName>
        <fullName evidence="3">Phylloseptin-N1</fullName>
        <shortName evidence="3">PLS-N1</shortName>
    </recommendedName>
    <alternativeName>
        <fullName evidence="2">Phylloseptin-H6</fullName>
        <shortName evidence="2">PLS-H6</shortName>
    </alternativeName>
</protein>
<name>PLS1_PITNO</name>
<reference key="1">
    <citation type="journal article" date="2013" name="Molecules">
        <title>The skin secretion of the amphibian Phyllomedusa nordestina: a source of antimicrobial and antiprotozoal peptides.</title>
        <authorList>
            <person name="Brand G.D."/>
            <person name="Santos R.C."/>
            <person name="Arake L.M."/>
            <person name="Silva V.G."/>
            <person name="Veras L.M."/>
            <person name="Costa V."/>
            <person name="Costa C.H."/>
            <person name="Kuckelhaus S.S."/>
            <person name="Alexandre J.G."/>
            <person name="Feio M.J."/>
            <person name="Leite J.R."/>
        </authorList>
    </citation>
    <scope>PROTEIN SEQUENCE</scope>
    <scope>FUNCTION</scope>
    <scope>MASS SPECTROMETRY</scope>
    <scope>AMIDATION AT PHE-19</scope>
    <scope>SYNTHESIS</scope>
</reference>
<feature type="peptide" id="PRO_0000449578" description="Phylloseptin-N1" evidence="1">
    <location>
        <begin position="1"/>
        <end position="19"/>
    </location>
</feature>
<feature type="modified residue" description="Phenylalanine amide" evidence="1">
    <location>
        <position position="19"/>
    </location>
</feature>
<keyword id="KW-0027">Amidation</keyword>
<keyword id="KW-0878">Amphibian defense peptide</keyword>
<keyword id="KW-0929">Antimicrobial</keyword>
<keyword id="KW-0903">Direct protein sequencing</keyword>
<keyword id="KW-0391">Immunity</keyword>
<keyword id="KW-0399">Innate immunity</keyword>
<keyword id="KW-0964">Secreted</keyword>